<gene>
    <name type="primary">csn-4</name>
    <name type="ORF">NCU07361</name>
</gene>
<reference key="1">
    <citation type="journal article" date="2005" name="Genes Dev.">
        <title>The COP9 signalosome regulates the Neurospora circadian clock by controlling the stability of the SCFFWD-1 complex.</title>
        <authorList>
            <person name="He Q."/>
            <person name="Cheng P."/>
            <person name="He Q."/>
            <person name="Liu Y."/>
        </authorList>
    </citation>
    <scope>NUCLEOTIDE SEQUENCE [MRNA]</scope>
    <scope>IDENTIFICATION BY MASS SPECTROMETRY</scope>
    <scope>IDENTIFICATION IN THE COP9 SIGNALOSOME COMPLEX</scope>
    <scope>FUNCTION OF THE COP9 SIGNALOSOME COMPLEX</scope>
</reference>
<reference key="2">
    <citation type="journal article" date="2003" name="Nature">
        <title>The genome sequence of the filamentous fungus Neurospora crassa.</title>
        <authorList>
            <person name="Galagan J.E."/>
            <person name="Calvo S.E."/>
            <person name="Borkovich K.A."/>
            <person name="Selker E.U."/>
            <person name="Read N.D."/>
            <person name="Jaffe D.B."/>
            <person name="FitzHugh W."/>
            <person name="Ma L.-J."/>
            <person name="Smirnov S."/>
            <person name="Purcell S."/>
            <person name="Rehman B."/>
            <person name="Elkins T."/>
            <person name="Engels R."/>
            <person name="Wang S."/>
            <person name="Nielsen C.B."/>
            <person name="Butler J."/>
            <person name="Endrizzi M."/>
            <person name="Qui D."/>
            <person name="Ianakiev P."/>
            <person name="Bell-Pedersen D."/>
            <person name="Nelson M.A."/>
            <person name="Werner-Washburne M."/>
            <person name="Selitrennikoff C.P."/>
            <person name="Kinsey J.A."/>
            <person name="Braun E.L."/>
            <person name="Zelter A."/>
            <person name="Schulte U."/>
            <person name="Kothe G.O."/>
            <person name="Jedd G."/>
            <person name="Mewes H.-W."/>
            <person name="Staben C."/>
            <person name="Marcotte E."/>
            <person name="Greenberg D."/>
            <person name="Roy A."/>
            <person name="Foley K."/>
            <person name="Naylor J."/>
            <person name="Stange-Thomann N."/>
            <person name="Barrett R."/>
            <person name="Gnerre S."/>
            <person name="Kamal M."/>
            <person name="Kamvysselis M."/>
            <person name="Mauceli E.W."/>
            <person name="Bielke C."/>
            <person name="Rudd S."/>
            <person name="Frishman D."/>
            <person name="Krystofova S."/>
            <person name="Rasmussen C."/>
            <person name="Metzenberg R.L."/>
            <person name="Perkins D.D."/>
            <person name="Kroken S."/>
            <person name="Cogoni C."/>
            <person name="Macino G."/>
            <person name="Catcheside D.E.A."/>
            <person name="Li W."/>
            <person name="Pratt R.J."/>
            <person name="Osmani S.A."/>
            <person name="DeSouza C.P.C."/>
            <person name="Glass N.L."/>
            <person name="Orbach M.J."/>
            <person name="Berglund J.A."/>
            <person name="Voelker R."/>
            <person name="Yarden O."/>
            <person name="Plamann M."/>
            <person name="Seiler S."/>
            <person name="Dunlap J.C."/>
            <person name="Radford A."/>
            <person name="Aramayo R."/>
            <person name="Natvig D.O."/>
            <person name="Alex L.A."/>
            <person name="Mannhaupt G."/>
            <person name="Ebbole D.J."/>
            <person name="Freitag M."/>
            <person name="Paulsen I."/>
            <person name="Sachs M.S."/>
            <person name="Lander E.S."/>
            <person name="Nusbaum C."/>
            <person name="Birren B.W."/>
        </authorList>
    </citation>
    <scope>NUCLEOTIDE SEQUENCE [LARGE SCALE GENOMIC DNA]</scope>
    <source>
        <strain>ATCC 24698 / 74-OR23-1A / CBS 708.71 / DSM 1257 / FGSC 987</strain>
    </source>
</reference>
<feature type="chain" id="PRO_0000314745" description="COP9 signalosome complex subunit 4">
    <location>
        <begin position="1"/>
        <end position="440"/>
    </location>
</feature>
<feature type="domain" description="PCI" evidence="2">
    <location>
        <begin position="216"/>
        <end position="386"/>
    </location>
</feature>
<accession>Q7S0P8</accession>
<protein>
    <recommendedName>
        <fullName>COP9 signalosome complex subunit 4</fullName>
        <shortName>Signalosome subunit 4</shortName>
    </recommendedName>
</protein>
<proteinExistence type="evidence at protein level"/>
<sequence length="440" mass="47926">MVSSEVRDLLAQVPNWSQADRPAAFRTIITTITSSPDPSHFAADLKAVTDAIFLESLGVVATRALVIDLIDALKSLASGGPSADSINSTTSSIWLDVGKAIQQHIQSNPTLATSLVDQTATIYEELLAAAHESQNSFTDAAKTLAAIPLDSSQRRVTDKYKADLWIRIIRNYLEDDDATSAETYLNKLKNIIHNVADDNPVLNLHFKLSAARIQDSNRQFLAASQSYYEISLSPAIAEEERLHTLSMAIKCAVLAPAGPPRSRVLARLYKDERSASLEEFGILEKMFLDRLLARAEVEKFAQGLAPHQLATTSDGSTVLAKAMVEHNLLAVSRLYRNIGFDALGSWLGLDSGNKAEEITARMIEQGRLAGSIDQIDRIIYFESGLEASGEKGSGRAEVPVGKEMRRQDGMVQALAEDLERITDDLLVEFPQLVPAGVPGN</sequence>
<name>CSN4_NEUCR</name>
<dbReference type="EMBL" id="DQ242512">
    <property type="protein sequence ID" value="ABB36582.1"/>
    <property type="molecule type" value="mRNA"/>
</dbReference>
<dbReference type="EMBL" id="CM002236">
    <property type="protein sequence ID" value="EAA28898.1"/>
    <property type="molecule type" value="Genomic_DNA"/>
</dbReference>
<dbReference type="RefSeq" id="XP_958134.1">
    <property type="nucleotide sequence ID" value="XM_953041.2"/>
</dbReference>
<dbReference type="SMR" id="Q7S0P8"/>
<dbReference type="STRING" id="367110.Q7S0P8"/>
<dbReference type="PaxDb" id="5141-EFNCRP00000007346"/>
<dbReference type="EnsemblFungi" id="EAA28898">
    <property type="protein sequence ID" value="EAA28898"/>
    <property type="gene ID" value="NCU07361"/>
</dbReference>
<dbReference type="GeneID" id="3874281"/>
<dbReference type="KEGG" id="ncr:NCU07361"/>
<dbReference type="VEuPathDB" id="FungiDB:NCU07361"/>
<dbReference type="HOGENOM" id="CLU_028132_1_0_1"/>
<dbReference type="InParanoid" id="Q7S0P8"/>
<dbReference type="OMA" id="KNIMHTV"/>
<dbReference type="OrthoDB" id="295656at2759"/>
<dbReference type="Proteomes" id="UP000001805">
    <property type="component" value="Chromosome 1, Linkage Group I"/>
</dbReference>
<dbReference type="GO" id="GO:0008180">
    <property type="term" value="C:COP9 signalosome"/>
    <property type="evidence" value="ECO:0000318"/>
    <property type="project" value="GO_Central"/>
</dbReference>
<dbReference type="GO" id="GO:0005737">
    <property type="term" value="C:cytoplasm"/>
    <property type="evidence" value="ECO:0007669"/>
    <property type="project" value="UniProtKB-SubCell"/>
</dbReference>
<dbReference type="FunFam" id="1.10.10.10:FF:000190">
    <property type="entry name" value="COP9 signalosome complex subunit 4"/>
    <property type="match status" value="1"/>
</dbReference>
<dbReference type="Gene3D" id="1.10.10.10">
    <property type="entry name" value="Winged helix-like DNA-binding domain superfamily/Winged helix DNA-binding domain"/>
    <property type="match status" value="1"/>
</dbReference>
<dbReference type="InterPro" id="IPR000717">
    <property type="entry name" value="PCI_dom"/>
</dbReference>
<dbReference type="InterPro" id="IPR054559">
    <property type="entry name" value="PSMD12-CSN4-like_N"/>
</dbReference>
<dbReference type="InterPro" id="IPR040134">
    <property type="entry name" value="PSMD12/CSN4"/>
</dbReference>
<dbReference type="InterPro" id="IPR036388">
    <property type="entry name" value="WH-like_DNA-bd_sf"/>
</dbReference>
<dbReference type="InterPro" id="IPR036390">
    <property type="entry name" value="WH_DNA-bd_sf"/>
</dbReference>
<dbReference type="PANTHER" id="PTHR10855">
    <property type="entry name" value="26S PROTEASOME NON-ATPASE REGULATORY SUBUNIT 12/COP9 SIGNALOSOME COMPLEX SUBUNIT 4"/>
    <property type="match status" value="1"/>
</dbReference>
<dbReference type="PANTHER" id="PTHR10855:SF2">
    <property type="entry name" value="COP9 SIGNALOSOME COMPLEX SUBUNIT 4"/>
    <property type="match status" value="1"/>
</dbReference>
<dbReference type="Pfam" id="PF01399">
    <property type="entry name" value="PCI"/>
    <property type="match status" value="1"/>
</dbReference>
<dbReference type="Pfam" id="PF22241">
    <property type="entry name" value="PSMD12-CSN4_N"/>
    <property type="match status" value="1"/>
</dbReference>
<dbReference type="SMART" id="SM00088">
    <property type="entry name" value="PINT"/>
    <property type="match status" value="1"/>
</dbReference>
<dbReference type="SUPFAM" id="SSF46785">
    <property type="entry name" value="Winged helix' DNA-binding domain"/>
    <property type="match status" value="1"/>
</dbReference>
<dbReference type="PROSITE" id="PS50250">
    <property type="entry name" value="PCI"/>
    <property type="match status" value="1"/>
</dbReference>
<evidence type="ECO:0000250" key="1"/>
<evidence type="ECO:0000255" key="2">
    <source>
        <dbReference type="PROSITE-ProRule" id="PRU01185"/>
    </source>
</evidence>
<evidence type="ECO:0000269" key="3">
    <source>
    </source>
</evidence>
<evidence type="ECO:0000305" key="4"/>
<comment type="function">
    <text evidence="1 3">Component of the COP9 signalosome (CSN) complex that acts as an regulator of the ubiquitin (Ubl) conjugation pathway by mediating the deneddylation of the cullin subunit of SCF-type E3 ubiquitin-protein ligase complexes (By similarity). The CSN complex is involved in the regulation of the circadian clock through its control of the stability of the SCF(FWD1) complex.</text>
</comment>
<comment type="subunit">
    <text evidence="3">Component of the COP9 signalosome (CSN) complex.</text>
</comment>
<comment type="subcellular location">
    <subcellularLocation>
        <location evidence="1">Cytoplasm</location>
    </subcellularLocation>
    <subcellularLocation>
        <location evidence="1">Nucleus</location>
    </subcellularLocation>
</comment>
<comment type="similarity">
    <text evidence="4">Belongs to the CSN4 family.</text>
</comment>
<organism>
    <name type="scientific">Neurospora crassa (strain ATCC 24698 / 74-OR23-1A / CBS 708.71 / DSM 1257 / FGSC 987)</name>
    <dbReference type="NCBI Taxonomy" id="367110"/>
    <lineage>
        <taxon>Eukaryota</taxon>
        <taxon>Fungi</taxon>
        <taxon>Dikarya</taxon>
        <taxon>Ascomycota</taxon>
        <taxon>Pezizomycotina</taxon>
        <taxon>Sordariomycetes</taxon>
        <taxon>Sordariomycetidae</taxon>
        <taxon>Sordariales</taxon>
        <taxon>Sordariaceae</taxon>
        <taxon>Neurospora</taxon>
    </lineage>
</organism>
<keyword id="KW-0963">Cytoplasm</keyword>
<keyword id="KW-0539">Nucleus</keyword>
<keyword id="KW-1185">Reference proteome</keyword>
<keyword id="KW-0736">Signalosome</keyword>